<dbReference type="EC" id="6.3.4.4" evidence="1"/>
<dbReference type="EMBL" id="CP000828">
    <property type="protein sequence ID" value="ABW30342.1"/>
    <property type="molecule type" value="Genomic_DNA"/>
</dbReference>
<dbReference type="RefSeq" id="WP_012165584.1">
    <property type="nucleotide sequence ID" value="NC_009925.1"/>
</dbReference>
<dbReference type="SMR" id="B0CBU2"/>
<dbReference type="STRING" id="329726.AM1_5386"/>
<dbReference type="KEGG" id="amr:AM1_5386"/>
<dbReference type="eggNOG" id="COG0104">
    <property type="taxonomic scope" value="Bacteria"/>
</dbReference>
<dbReference type="HOGENOM" id="CLU_029848_0_0_3"/>
<dbReference type="OrthoDB" id="9807553at2"/>
<dbReference type="UniPathway" id="UPA00075">
    <property type="reaction ID" value="UER00335"/>
</dbReference>
<dbReference type="Proteomes" id="UP000000268">
    <property type="component" value="Chromosome"/>
</dbReference>
<dbReference type="GO" id="GO:0005737">
    <property type="term" value="C:cytoplasm"/>
    <property type="evidence" value="ECO:0007669"/>
    <property type="project" value="UniProtKB-SubCell"/>
</dbReference>
<dbReference type="GO" id="GO:0004019">
    <property type="term" value="F:adenylosuccinate synthase activity"/>
    <property type="evidence" value="ECO:0007669"/>
    <property type="project" value="UniProtKB-UniRule"/>
</dbReference>
<dbReference type="GO" id="GO:0005525">
    <property type="term" value="F:GTP binding"/>
    <property type="evidence" value="ECO:0007669"/>
    <property type="project" value="UniProtKB-UniRule"/>
</dbReference>
<dbReference type="GO" id="GO:0000287">
    <property type="term" value="F:magnesium ion binding"/>
    <property type="evidence" value="ECO:0007669"/>
    <property type="project" value="UniProtKB-UniRule"/>
</dbReference>
<dbReference type="GO" id="GO:0044208">
    <property type="term" value="P:'de novo' AMP biosynthetic process"/>
    <property type="evidence" value="ECO:0007669"/>
    <property type="project" value="UniProtKB-UniRule"/>
</dbReference>
<dbReference type="GO" id="GO:0046040">
    <property type="term" value="P:IMP metabolic process"/>
    <property type="evidence" value="ECO:0007669"/>
    <property type="project" value="TreeGrafter"/>
</dbReference>
<dbReference type="CDD" id="cd03108">
    <property type="entry name" value="AdSS"/>
    <property type="match status" value="1"/>
</dbReference>
<dbReference type="FunFam" id="1.10.300.10:FF:000001">
    <property type="entry name" value="Adenylosuccinate synthetase"/>
    <property type="match status" value="1"/>
</dbReference>
<dbReference type="FunFam" id="3.90.170.10:FF:000001">
    <property type="entry name" value="Adenylosuccinate synthetase"/>
    <property type="match status" value="1"/>
</dbReference>
<dbReference type="Gene3D" id="3.40.440.10">
    <property type="entry name" value="Adenylosuccinate Synthetase, subunit A, domain 1"/>
    <property type="match status" value="1"/>
</dbReference>
<dbReference type="Gene3D" id="1.10.300.10">
    <property type="entry name" value="Adenylosuccinate Synthetase, subunit A, domain 2"/>
    <property type="match status" value="1"/>
</dbReference>
<dbReference type="Gene3D" id="3.90.170.10">
    <property type="entry name" value="Adenylosuccinate Synthetase, subunit A, domain 3"/>
    <property type="match status" value="1"/>
</dbReference>
<dbReference type="HAMAP" id="MF_00011">
    <property type="entry name" value="Adenylosucc_synth"/>
    <property type="match status" value="1"/>
</dbReference>
<dbReference type="InterPro" id="IPR018220">
    <property type="entry name" value="Adenylosuccin_syn_GTP-bd"/>
</dbReference>
<dbReference type="InterPro" id="IPR033128">
    <property type="entry name" value="Adenylosuccin_syn_Lys_AS"/>
</dbReference>
<dbReference type="InterPro" id="IPR042109">
    <property type="entry name" value="Adenylosuccinate_synth_dom1"/>
</dbReference>
<dbReference type="InterPro" id="IPR042110">
    <property type="entry name" value="Adenylosuccinate_synth_dom2"/>
</dbReference>
<dbReference type="InterPro" id="IPR042111">
    <property type="entry name" value="Adenylosuccinate_synth_dom3"/>
</dbReference>
<dbReference type="InterPro" id="IPR001114">
    <property type="entry name" value="Adenylosuccinate_synthetase"/>
</dbReference>
<dbReference type="InterPro" id="IPR027417">
    <property type="entry name" value="P-loop_NTPase"/>
</dbReference>
<dbReference type="NCBIfam" id="NF002223">
    <property type="entry name" value="PRK01117.1"/>
    <property type="match status" value="1"/>
</dbReference>
<dbReference type="NCBIfam" id="TIGR00184">
    <property type="entry name" value="purA"/>
    <property type="match status" value="1"/>
</dbReference>
<dbReference type="PANTHER" id="PTHR11846">
    <property type="entry name" value="ADENYLOSUCCINATE SYNTHETASE"/>
    <property type="match status" value="1"/>
</dbReference>
<dbReference type="PANTHER" id="PTHR11846:SF0">
    <property type="entry name" value="ADENYLOSUCCINATE SYNTHETASE"/>
    <property type="match status" value="1"/>
</dbReference>
<dbReference type="Pfam" id="PF00709">
    <property type="entry name" value="Adenylsucc_synt"/>
    <property type="match status" value="1"/>
</dbReference>
<dbReference type="SMART" id="SM00788">
    <property type="entry name" value="Adenylsucc_synt"/>
    <property type="match status" value="1"/>
</dbReference>
<dbReference type="SUPFAM" id="SSF52540">
    <property type="entry name" value="P-loop containing nucleoside triphosphate hydrolases"/>
    <property type="match status" value="1"/>
</dbReference>
<dbReference type="PROSITE" id="PS01266">
    <property type="entry name" value="ADENYLOSUCCIN_SYN_1"/>
    <property type="match status" value="1"/>
</dbReference>
<dbReference type="PROSITE" id="PS00513">
    <property type="entry name" value="ADENYLOSUCCIN_SYN_2"/>
    <property type="match status" value="1"/>
</dbReference>
<proteinExistence type="inferred from homology"/>
<accession>B0CBU2</accession>
<comment type="function">
    <text evidence="1">Plays an important role in the de novo pathway of purine nucleotide biosynthesis. Catalyzes the first committed step in the biosynthesis of AMP from IMP.</text>
</comment>
<comment type="catalytic activity">
    <reaction evidence="1">
        <text>IMP + L-aspartate + GTP = N(6)-(1,2-dicarboxyethyl)-AMP + GDP + phosphate + 2 H(+)</text>
        <dbReference type="Rhea" id="RHEA:15753"/>
        <dbReference type="ChEBI" id="CHEBI:15378"/>
        <dbReference type="ChEBI" id="CHEBI:29991"/>
        <dbReference type="ChEBI" id="CHEBI:37565"/>
        <dbReference type="ChEBI" id="CHEBI:43474"/>
        <dbReference type="ChEBI" id="CHEBI:57567"/>
        <dbReference type="ChEBI" id="CHEBI:58053"/>
        <dbReference type="ChEBI" id="CHEBI:58189"/>
        <dbReference type="EC" id="6.3.4.4"/>
    </reaction>
</comment>
<comment type="cofactor">
    <cofactor evidence="1">
        <name>Mg(2+)</name>
        <dbReference type="ChEBI" id="CHEBI:18420"/>
    </cofactor>
    <text evidence="1">Binds 1 Mg(2+) ion per subunit.</text>
</comment>
<comment type="pathway">
    <text evidence="1">Purine metabolism; AMP biosynthesis via de novo pathway; AMP from IMP: step 1/2.</text>
</comment>
<comment type="subunit">
    <text evidence="1">Homodimer.</text>
</comment>
<comment type="subcellular location">
    <subcellularLocation>
        <location evidence="1">Cytoplasm</location>
    </subcellularLocation>
</comment>
<comment type="similarity">
    <text evidence="1">Belongs to the adenylosuccinate synthetase family.</text>
</comment>
<sequence length="446" mass="49192">MANVVVIGAQWGDEGKGKITDLLSRSADVVVRYQGGVNAGHTVVVNDQTFKLHLIPSGILYPNTDCIIGSGTVIDPKVLIEELDMLDKLGVSTSHLFISESAHVTMPYHRMIDQASEERRGDHKIGTTGRGIGPTYADKSERTGIRILDLMDPEGMKKQLRWTVNYKNVILEKLYNLPHLDPEEVIAEYQVYADRLRPFVADCSLKIYDAYQQHRNILFEGAQGTLLDLDHGTYPYVTSSNPVAGGACVGTGVGPTMIDRVIGVAKAYTTRVGEGPFPTELHDEMGVALCERGAEFGTTTGRRRRCGWFDAVIGRYAVRINGLDCLAVTKLDILDEVDEIKVCVAYEIDGHESKDFPTNARQFSRCNPVYKTLPGWKQSTIHCRTLEDLPPKALDYLKFLASIVEVPIAIVSLGAERDETIIVEDPIHGPKRALLYSNGESQAMSA</sequence>
<name>PURA_ACAM1</name>
<protein>
    <recommendedName>
        <fullName evidence="1">Adenylosuccinate synthetase</fullName>
        <shortName evidence="1">AMPSase</shortName>
        <shortName evidence="1">AdSS</shortName>
        <ecNumber evidence="1">6.3.4.4</ecNumber>
    </recommendedName>
    <alternativeName>
        <fullName evidence="1">IMP--aspartate ligase</fullName>
    </alternativeName>
</protein>
<keyword id="KW-0963">Cytoplasm</keyword>
<keyword id="KW-0342">GTP-binding</keyword>
<keyword id="KW-0436">Ligase</keyword>
<keyword id="KW-0460">Magnesium</keyword>
<keyword id="KW-0479">Metal-binding</keyword>
<keyword id="KW-0547">Nucleotide-binding</keyword>
<keyword id="KW-0658">Purine biosynthesis</keyword>
<keyword id="KW-1185">Reference proteome</keyword>
<feature type="chain" id="PRO_1000073935" description="Adenylosuccinate synthetase">
    <location>
        <begin position="1"/>
        <end position="446"/>
    </location>
</feature>
<feature type="active site" description="Proton acceptor" evidence="1">
    <location>
        <position position="13"/>
    </location>
</feature>
<feature type="active site" description="Proton donor" evidence="1">
    <location>
        <position position="41"/>
    </location>
</feature>
<feature type="binding site" evidence="1">
    <location>
        <begin position="12"/>
        <end position="18"/>
    </location>
    <ligand>
        <name>GTP</name>
        <dbReference type="ChEBI" id="CHEBI:37565"/>
    </ligand>
</feature>
<feature type="binding site" description="in other chain" evidence="1">
    <location>
        <begin position="13"/>
        <end position="16"/>
    </location>
    <ligand>
        <name>IMP</name>
        <dbReference type="ChEBI" id="CHEBI:58053"/>
        <note>ligand shared between dimeric partners</note>
    </ligand>
</feature>
<feature type="binding site" evidence="1">
    <location>
        <position position="13"/>
    </location>
    <ligand>
        <name>Mg(2+)</name>
        <dbReference type="ChEBI" id="CHEBI:18420"/>
    </ligand>
</feature>
<feature type="binding site" description="in other chain" evidence="1">
    <location>
        <begin position="38"/>
        <end position="41"/>
    </location>
    <ligand>
        <name>IMP</name>
        <dbReference type="ChEBI" id="CHEBI:58053"/>
        <note>ligand shared between dimeric partners</note>
    </ligand>
</feature>
<feature type="binding site" evidence="1">
    <location>
        <begin position="40"/>
        <end position="42"/>
    </location>
    <ligand>
        <name>GTP</name>
        <dbReference type="ChEBI" id="CHEBI:37565"/>
    </ligand>
</feature>
<feature type="binding site" evidence="1">
    <location>
        <position position="40"/>
    </location>
    <ligand>
        <name>Mg(2+)</name>
        <dbReference type="ChEBI" id="CHEBI:18420"/>
    </ligand>
</feature>
<feature type="binding site" description="in other chain" evidence="1">
    <location>
        <position position="128"/>
    </location>
    <ligand>
        <name>IMP</name>
        <dbReference type="ChEBI" id="CHEBI:58053"/>
        <note>ligand shared between dimeric partners</note>
    </ligand>
</feature>
<feature type="binding site" evidence="1">
    <location>
        <position position="142"/>
    </location>
    <ligand>
        <name>IMP</name>
        <dbReference type="ChEBI" id="CHEBI:58053"/>
        <note>ligand shared between dimeric partners</note>
    </ligand>
</feature>
<feature type="binding site" description="in other chain" evidence="1">
    <location>
        <position position="223"/>
    </location>
    <ligand>
        <name>IMP</name>
        <dbReference type="ChEBI" id="CHEBI:58053"/>
        <note>ligand shared between dimeric partners</note>
    </ligand>
</feature>
<feature type="binding site" description="in other chain" evidence="1">
    <location>
        <position position="238"/>
    </location>
    <ligand>
        <name>IMP</name>
        <dbReference type="ChEBI" id="CHEBI:58053"/>
        <note>ligand shared between dimeric partners</note>
    </ligand>
</feature>
<feature type="binding site" evidence="1">
    <location>
        <begin position="298"/>
        <end position="304"/>
    </location>
    <ligand>
        <name>substrate</name>
    </ligand>
</feature>
<feature type="binding site" description="in other chain" evidence="1">
    <location>
        <position position="302"/>
    </location>
    <ligand>
        <name>IMP</name>
        <dbReference type="ChEBI" id="CHEBI:58053"/>
        <note>ligand shared between dimeric partners</note>
    </ligand>
</feature>
<feature type="binding site" evidence="1">
    <location>
        <position position="304"/>
    </location>
    <ligand>
        <name>GTP</name>
        <dbReference type="ChEBI" id="CHEBI:37565"/>
    </ligand>
</feature>
<feature type="binding site" evidence="1">
    <location>
        <begin position="330"/>
        <end position="332"/>
    </location>
    <ligand>
        <name>GTP</name>
        <dbReference type="ChEBI" id="CHEBI:37565"/>
    </ligand>
</feature>
<feature type="binding site" evidence="1">
    <location>
        <begin position="412"/>
        <end position="414"/>
    </location>
    <ligand>
        <name>GTP</name>
        <dbReference type="ChEBI" id="CHEBI:37565"/>
    </ligand>
</feature>
<organism>
    <name type="scientific">Acaryochloris marina (strain MBIC 11017)</name>
    <dbReference type="NCBI Taxonomy" id="329726"/>
    <lineage>
        <taxon>Bacteria</taxon>
        <taxon>Bacillati</taxon>
        <taxon>Cyanobacteriota</taxon>
        <taxon>Cyanophyceae</taxon>
        <taxon>Acaryochloridales</taxon>
        <taxon>Acaryochloridaceae</taxon>
        <taxon>Acaryochloris</taxon>
    </lineage>
</organism>
<evidence type="ECO:0000255" key="1">
    <source>
        <dbReference type="HAMAP-Rule" id="MF_00011"/>
    </source>
</evidence>
<reference key="1">
    <citation type="journal article" date="2008" name="Proc. Natl. Acad. Sci. U.S.A.">
        <title>Niche adaptation and genome expansion in the chlorophyll d-producing cyanobacterium Acaryochloris marina.</title>
        <authorList>
            <person name="Swingley W.D."/>
            <person name="Chen M."/>
            <person name="Cheung P.C."/>
            <person name="Conrad A.L."/>
            <person name="Dejesa L.C."/>
            <person name="Hao J."/>
            <person name="Honchak B.M."/>
            <person name="Karbach L.E."/>
            <person name="Kurdoglu A."/>
            <person name="Lahiri S."/>
            <person name="Mastrian S.D."/>
            <person name="Miyashita H."/>
            <person name="Page L."/>
            <person name="Ramakrishna P."/>
            <person name="Satoh S."/>
            <person name="Sattley W.M."/>
            <person name="Shimada Y."/>
            <person name="Taylor H.L."/>
            <person name="Tomo T."/>
            <person name="Tsuchiya T."/>
            <person name="Wang Z.T."/>
            <person name="Raymond J."/>
            <person name="Mimuro M."/>
            <person name="Blankenship R.E."/>
            <person name="Touchman J.W."/>
        </authorList>
    </citation>
    <scope>NUCLEOTIDE SEQUENCE [LARGE SCALE GENOMIC DNA]</scope>
    <source>
        <strain>MBIC 11017</strain>
    </source>
</reference>
<gene>
    <name evidence="1" type="primary">purA</name>
    <name type="ordered locus">AM1_5386</name>
</gene>